<evidence type="ECO:0000255" key="1">
    <source>
        <dbReference type="HAMAP-Rule" id="MF_00008"/>
    </source>
</evidence>
<feature type="chain" id="PRO_1000000635" description="Thymidylate synthase">
    <location>
        <begin position="1"/>
        <end position="266"/>
    </location>
</feature>
<feature type="active site" description="Nucleophile" evidence="1">
    <location>
        <position position="149"/>
    </location>
</feature>
<feature type="binding site" description="in other chain" evidence="1">
    <location>
        <position position="24"/>
    </location>
    <ligand>
        <name>dUMP</name>
        <dbReference type="ChEBI" id="CHEBI:246422"/>
        <note>ligand shared between dimeric partners</note>
    </ligand>
</feature>
<feature type="binding site" evidence="1">
    <location>
        <position position="54"/>
    </location>
    <ligand>
        <name>(6R)-5,10-methylene-5,6,7,8-tetrahydrofolate</name>
        <dbReference type="ChEBI" id="CHEBI:15636"/>
    </ligand>
</feature>
<feature type="binding site" evidence="1">
    <location>
        <begin position="129"/>
        <end position="130"/>
    </location>
    <ligand>
        <name>dUMP</name>
        <dbReference type="ChEBI" id="CHEBI:246422"/>
        <note>ligand shared between dimeric partners</note>
    </ligand>
</feature>
<feature type="binding site" description="in other chain" evidence="1">
    <location>
        <begin position="169"/>
        <end position="172"/>
    </location>
    <ligand>
        <name>dUMP</name>
        <dbReference type="ChEBI" id="CHEBI:246422"/>
        <note>ligand shared between dimeric partners</note>
    </ligand>
</feature>
<feature type="binding site" evidence="1">
    <location>
        <position position="172"/>
    </location>
    <ligand>
        <name>(6R)-5,10-methylene-5,6,7,8-tetrahydrofolate</name>
        <dbReference type="ChEBI" id="CHEBI:15636"/>
    </ligand>
</feature>
<feature type="binding site" description="in other chain" evidence="1">
    <location>
        <position position="180"/>
    </location>
    <ligand>
        <name>dUMP</name>
        <dbReference type="ChEBI" id="CHEBI:246422"/>
        <note>ligand shared between dimeric partners</note>
    </ligand>
</feature>
<feature type="binding site" description="in other chain" evidence="1">
    <location>
        <begin position="210"/>
        <end position="212"/>
    </location>
    <ligand>
        <name>dUMP</name>
        <dbReference type="ChEBI" id="CHEBI:246422"/>
        <note>ligand shared between dimeric partners</note>
    </ligand>
</feature>
<feature type="binding site" evidence="1">
    <location>
        <position position="265"/>
    </location>
    <ligand>
        <name>(6R)-5,10-methylene-5,6,7,8-tetrahydrofolate</name>
        <dbReference type="ChEBI" id="CHEBI:15636"/>
    </ligand>
</feature>
<accession>A0PQG7</accession>
<protein>
    <recommendedName>
        <fullName evidence="1">Thymidylate synthase</fullName>
        <shortName evidence="1">TS</shortName>
        <shortName evidence="1">TSase</shortName>
        <ecNumber evidence="1">2.1.1.45</ecNumber>
    </recommendedName>
</protein>
<organism>
    <name type="scientific">Mycobacterium ulcerans (strain Agy99)</name>
    <dbReference type="NCBI Taxonomy" id="362242"/>
    <lineage>
        <taxon>Bacteria</taxon>
        <taxon>Bacillati</taxon>
        <taxon>Actinomycetota</taxon>
        <taxon>Actinomycetes</taxon>
        <taxon>Mycobacteriales</taxon>
        <taxon>Mycobacteriaceae</taxon>
        <taxon>Mycobacterium</taxon>
        <taxon>Mycobacterium ulcerans group</taxon>
    </lineage>
</organism>
<keyword id="KW-0963">Cytoplasm</keyword>
<keyword id="KW-0489">Methyltransferase</keyword>
<keyword id="KW-0545">Nucleotide biosynthesis</keyword>
<keyword id="KW-0808">Transferase</keyword>
<name>TYSY_MYCUA</name>
<dbReference type="EC" id="2.1.1.45" evidence="1"/>
<dbReference type="EMBL" id="CP000325">
    <property type="protein sequence ID" value="ABL04586.1"/>
    <property type="molecule type" value="Genomic_DNA"/>
</dbReference>
<dbReference type="RefSeq" id="WP_011740203.1">
    <property type="nucleotide sequence ID" value="NC_008611.1"/>
</dbReference>
<dbReference type="SMR" id="A0PQG7"/>
<dbReference type="KEGG" id="mul:MUL_2178"/>
<dbReference type="eggNOG" id="COG0207">
    <property type="taxonomic scope" value="Bacteria"/>
</dbReference>
<dbReference type="HOGENOM" id="CLU_021669_0_0_11"/>
<dbReference type="UniPathway" id="UPA00575"/>
<dbReference type="Proteomes" id="UP000000765">
    <property type="component" value="Chromosome"/>
</dbReference>
<dbReference type="GO" id="GO:0005829">
    <property type="term" value="C:cytosol"/>
    <property type="evidence" value="ECO:0007669"/>
    <property type="project" value="TreeGrafter"/>
</dbReference>
<dbReference type="GO" id="GO:0004799">
    <property type="term" value="F:thymidylate synthase activity"/>
    <property type="evidence" value="ECO:0007669"/>
    <property type="project" value="UniProtKB-UniRule"/>
</dbReference>
<dbReference type="GO" id="GO:0006231">
    <property type="term" value="P:dTMP biosynthetic process"/>
    <property type="evidence" value="ECO:0007669"/>
    <property type="project" value="UniProtKB-UniRule"/>
</dbReference>
<dbReference type="GO" id="GO:0006235">
    <property type="term" value="P:dTTP biosynthetic process"/>
    <property type="evidence" value="ECO:0007669"/>
    <property type="project" value="UniProtKB-UniRule"/>
</dbReference>
<dbReference type="GO" id="GO:0032259">
    <property type="term" value="P:methylation"/>
    <property type="evidence" value="ECO:0007669"/>
    <property type="project" value="UniProtKB-KW"/>
</dbReference>
<dbReference type="CDD" id="cd00351">
    <property type="entry name" value="TS_Pyrimidine_HMase"/>
    <property type="match status" value="1"/>
</dbReference>
<dbReference type="FunFam" id="3.30.572.10:FF:000001">
    <property type="entry name" value="Thymidylate synthase"/>
    <property type="match status" value="1"/>
</dbReference>
<dbReference type="Gene3D" id="3.30.572.10">
    <property type="entry name" value="Thymidylate synthase/dCMP hydroxymethylase domain"/>
    <property type="match status" value="1"/>
</dbReference>
<dbReference type="HAMAP" id="MF_00008">
    <property type="entry name" value="Thymidy_synth_bact"/>
    <property type="match status" value="1"/>
</dbReference>
<dbReference type="InterPro" id="IPR045097">
    <property type="entry name" value="Thymidate_synth/dCMP_Mease"/>
</dbReference>
<dbReference type="InterPro" id="IPR023451">
    <property type="entry name" value="Thymidate_synth/dCMP_Mease_dom"/>
</dbReference>
<dbReference type="InterPro" id="IPR036926">
    <property type="entry name" value="Thymidate_synth/dCMP_Mease_sf"/>
</dbReference>
<dbReference type="InterPro" id="IPR000398">
    <property type="entry name" value="Thymidylate_synthase"/>
</dbReference>
<dbReference type="InterPro" id="IPR020940">
    <property type="entry name" value="Thymidylate_synthase_AS"/>
</dbReference>
<dbReference type="NCBIfam" id="NF002497">
    <property type="entry name" value="PRK01827.1-3"/>
    <property type="match status" value="1"/>
</dbReference>
<dbReference type="NCBIfam" id="NF002499">
    <property type="entry name" value="PRK01827.1-5"/>
    <property type="match status" value="1"/>
</dbReference>
<dbReference type="NCBIfam" id="TIGR03284">
    <property type="entry name" value="thym_sym"/>
    <property type="match status" value="2"/>
</dbReference>
<dbReference type="PANTHER" id="PTHR11548:SF9">
    <property type="entry name" value="THYMIDYLATE SYNTHASE"/>
    <property type="match status" value="1"/>
</dbReference>
<dbReference type="PANTHER" id="PTHR11548">
    <property type="entry name" value="THYMIDYLATE SYNTHASE 1"/>
    <property type="match status" value="1"/>
</dbReference>
<dbReference type="Pfam" id="PF00303">
    <property type="entry name" value="Thymidylat_synt"/>
    <property type="match status" value="1"/>
</dbReference>
<dbReference type="PRINTS" id="PR00108">
    <property type="entry name" value="THYMDSNTHASE"/>
</dbReference>
<dbReference type="SUPFAM" id="SSF55831">
    <property type="entry name" value="Thymidylate synthase/dCMP hydroxymethylase"/>
    <property type="match status" value="1"/>
</dbReference>
<dbReference type="PROSITE" id="PS00091">
    <property type="entry name" value="THYMIDYLATE_SYNTHASE"/>
    <property type="match status" value="1"/>
</dbReference>
<comment type="function">
    <text evidence="1">Catalyzes the reductive methylation of 2'-deoxyuridine-5'-monophosphate (dUMP) to 2'-deoxythymidine-5'-monophosphate (dTMP) while utilizing 5,10-methylenetetrahydrofolate (mTHF) as the methyl donor and reductant in the reaction, yielding dihydrofolate (DHF) as a by-product. This enzymatic reaction provides an intracellular de novo source of dTMP, an essential precursor for DNA biosynthesis.</text>
</comment>
<comment type="catalytic activity">
    <reaction evidence="1">
        <text>dUMP + (6R)-5,10-methylene-5,6,7,8-tetrahydrofolate = 7,8-dihydrofolate + dTMP</text>
        <dbReference type="Rhea" id="RHEA:12104"/>
        <dbReference type="ChEBI" id="CHEBI:15636"/>
        <dbReference type="ChEBI" id="CHEBI:57451"/>
        <dbReference type="ChEBI" id="CHEBI:63528"/>
        <dbReference type="ChEBI" id="CHEBI:246422"/>
        <dbReference type="EC" id="2.1.1.45"/>
    </reaction>
</comment>
<comment type="pathway">
    <text evidence="1">Pyrimidine metabolism; dTTP biosynthesis.</text>
</comment>
<comment type="subunit">
    <text evidence="1">Homodimer.</text>
</comment>
<comment type="subcellular location">
    <subcellularLocation>
        <location evidence="1">Cytoplasm</location>
    </subcellularLocation>
</comment>
<comment type="similarity">
    <text evidence="1">Belongs to the thymidylate synthase family. Bacterial-type ThyA subfamily.</text>
</comment>
<sequence length="266" mass="30094">MPIATPYEDLLRRVLETGTAKSDRTGTGTRSLFGQQIRYDLGCGFPLLTTKKVHFKSVVYELLWFLRGDSNVGWLQQHGVTIWDEWASETGDLGPIYGVQWRSWPTPSGEHIDQISAALELLRTDPDSRRIIVSAWNVGQIPQMALPPCHAFFQFYVADGRLSCQLYQRSADLFLGVPFNIASYALLTHMMAAQAGLSVGEFIWTGGDCHIYDNHVEQVTEQLRREPRPYPKLSLSQRDSIFDYTYEDVVVQDYDPHPAIKAPVAV</sequence>
<reference key="1">
    <citation type="journal article" date="2007" name="Genome Res.">
        <title>Reductive evolution and niche adaptation inferred from the genome of Mycobacterium ulcerans, the causative agent of Buruli ulcer.</title>
        <authorList>
            <person name="Stinear T.P."/>
            <person name="Seemann T."/>
            <person name="Pidot S."/>
            <person name="Frigui W."/>
            <person name="Reysset G."/>
            <person name="Garnier T."/>
            <person name="Meurice G."/>
            <person name="Simon D."/>
            <person name="Bouchier C."/>
            <person name="Ma L."/>
            <person name="Tichit M."/>
            <person name="Porter J.L."/>
            <person name="Ryan J."/>
            <person name="Johnson P.D.R."/>
            <person name="Davies J.K."/>
            <person name="Jenkin G.A."/>
            <person name="Small P.L.C."/>
            <person name="Jones L.M."/>
            <person name="Tekaia F."/>
            <person name="Laval F."/>
            <person name="Daffe M."/>
            <person name="Parkhill J."/>
            <person name="Cole S.T."/>
        </authorList>
    </citation>
    <scope>NUCLEOTIDE SEQUENCE [LARGE SCALE GENOMIC DNA]</scope>
    <source>
        <strain>Agy99</strain>
    </source>
</reference>
<gene>
    <name evidence="1" type="primary">thyA</name>
    <name type="ordered locus">MUL_2178</name>
</gene>
<proteinExistence type="inferred from homology"/>